<sequence length="365" mass="40306">MINLGDKQSTIVVAMSGGVDSSAVAAMLHEQGHNVIGITLQLYDHGMAVGKKNACCAGQDIYDAKMVANKLGIPHYVLDYESKFKESVIDNFVDSYLQGETPLPCVRCNKSVKFRDLIKTARELGADKLATGHYVRKINGDNGAELYTGLDPAKDQSYFLFTTTKEQLEYLRFPLGGLTKDETRKLASKFGLEVADKPDSQDICFVPDGNYKSVINKIRPNSSESGKIIHVNGFKLGEHSGIINYTIGQRRGLGIAYNEPLYVVKIDPKDNIVYVGPESALNVQEFIIRDVNWLADEIKDNEKLEVAVKIRSTRPPRLAEISKLGDDKMKVKFLCAEKAVAPGQACVIYAGERVLGGGWITREIR</sequence>
<protein>
    <recommendedName>
        <fullName evidence="1">tRNA-specific 2-thiouridylase MnmA</fullName>
        <ecNumber evidence="1">2.8.1.13</ecNumber>
    </recommendedName>
</protein>
<comment type="function">
    <text evidence="1">Catalyzes the 2-thiolation of uridine at the wobble position (U34) of tRNA, leading to the formation of s(2)U34.</text>
</comment>
<comment type="catalytic activity">
    <reaction evidence="1">
        <text>S-sulfanyl-L-cysteinyl-[protein] + uridine(34) in tRNA + AH2 + ATP = 2-thiouridine(34) in tRNA + L-cysteinyl-[protein] + A + AMP + diphosphate + H(+)</text>
        <dbReference type="Rhea" id="RHEA:47032"/>
        <dbReference type="Rhea" id="RHEA-COMP:10131"/>
        <dbReference type="Rhea" id="RHEA-COMP:11726"/>
        <dbReference type="Rhea" id="RHEA-COMP:11727"/>
        <dbReference type="Rhea" id="RHEA-COMP:11728"/>
        <dbReference type="ChEBI" id="CHEBI:13193"/>
        <dbReference type="ChEBI" id="CHEBI:15378"/>
        <dbReference type="ChEBI" id="CHEBI:17499"/>
        <dbReference type="ChEBI" id="CHEBI:29950"/>
        <dbReference type="ChEBI" id="CHEBI:30616"/>
        <dbReference type="ChEBI" id="CHEBI:33019"/>
        <dbReference type="ChEBI" id="CHEBI:61963"/>
        <dbReference type="ChEBI" id="CHEBI:65315"/>
        <dbReference type="ChEBI" id="CHEBI:87170"/>
        <dbReference type="ChEBI" id="CHEBI:456215"/>
        <dbReference type="EC" id="2.8.1.13"/>
    </reaction>
</comment>
<comment type="subcellular location">
    <subcellularLocation>
        <location evidence="1">Cytoplasm</location>
    </subcellularLocation>
</comment>
<comment type="similarity">
    <text evidence="1">Belongs to the MnmA/TRMU family.</text>
</comment>
<keyword id="KW-0067">ATP-binding</keyword>
<keyword id="KW-0963">Cytoplasm</keyword>
<keyword id="KW-1015">Disulfide bond</keyword>
<keyword id="KW-0547">Nucleotide-binding</keyword>
<keyword id="KW-0694">RNA-binding</keyword>
<keyword id="KW-0808">Transferase</keyword>
<keyword id="KW-0819">tRNA processing</keyword>
<keyword id="KW-0820">tRNA-binding</keyword>
<reference key="1">
    <citation type="journal article" date="2007" name="Genome Res.">
        <title>Lateral gene transfer between obligate intracellular bacteria: evidence from the Rickettsia massiliae genome.</title>
        <authorList>
            <person name="Blanc G."/>
            <person name="Ogata H."/>
            <person name="Robert C."/>
            <person name="Audic S."/>
            <person name="Claverie J.-M."/>
            <person name="Raoult D."/>
        </authorList>
    </citation>
    <scope>NUCLEOTIDE SEQUENCE [LARGE SCALE GENOMIC DNA]</scope>
    <source>
        <strain>Mtu5</strain>
    </source>
</reference>
<feature type="chain" id="PRO_0000349777" description="tRNA-specific 2-thiouridylase MnmA">
    <location>
        <begin position="1"/>
        <end position="365"/>
    </location>
</feature>
<feature type="region of interest" description="Interaction with tRNA" evidence="1">
    <location>
        <begin position="154"/>
        <end position="156"/>
    </location>
</feature>
<feature type="active site" description="Nucleophile" evidence="1">
    <location>
        <position position="108"/>
    </location>
</feature>
<feature type="active site" description="Cysteine persulfide intermediate" evidence="1">
    <location>
        <position position="204"/>
    </location>
</feature>
<feature type="binding site" evidence="1">
    <location>
        <begin position="14"/>
        <end position="21"/>
    </location>
    <ligand>
        <name>ATP</name>
        <dbReference type="ChEBI" id="CHEBI:30616"/>
    </ligand>
</feature>
<feature type="binding site" evidence="1">
    <location>
        <position position="40"/>
    </location>
    <ligand>
        <name>ATP</name>
        <dbReference type="ChEBI" id="CHEBI:30616"/>
    </ligand>
</feature>
<feature type="binding site" evidence="1">
    <location>
        <position position="132"/>
    </location>
    <ligand>
        <name>ATP</name>
        <dbReference type="ChEBI" id="CHEBI:30616"/>
    </ligand>
</feature>
<feature type="site" description="Interaction with tRNA" evidence="1">
    <location>
        <position position="133"/>
    </location>
</feature>
<feature type="site" description="Interaction with tRNA" evidence="1">
    <location>
        <position position="344"/>
    </location>
</feature>
<feature type="disulfide bond" description="Alternate" evidence="1">
    <location>
        <begin position="108"/>
        <end position="204"/>
    </location>
</feature>
<evidence type="ECO:0000255" key="1">
    <source>
        <dbReference type="HAMAP-Rule" id="MF_00144"/>
    </source>
</evidence>
<name>MNMA_RICM5</name>
<accession>A8F172</accession>
<proteinExistence type="inferred from homology"/>
<gene>
    <name evidence="1" type="primary">mnmA</name>
    <name type="ordered locus">RMA_0420</name>
</gene>
<organism>
    <name type="scientific">Rickettsia massiliae (strain Mtu5)</name>
    <dbReference type="NCBI Taxonomy" id="416276"/>
    <lineage>
        <taxon>Bacteria</taxon>
        <taxon>Pseudomonadati</taxon>
        <taxon>Pseudomonadota</taxon>
        <taxon>Alphaproteobacteria</taxon>
        <taxon>Rickettsiales</taxon>
        <taxon>Rickettsiaceae</taxon>
        <taxon>Rickettsieae</taxon>
        <taxon>Rickettsia</taxon>
        <taxon>spotted fever group</taxon>
    </lineage>
</organism>
<dbReference type="EC" id="2.8.1.13" evidence="1"/>
<dbReference type="EMBL" id="CP000683">
    <property type="protein sequence ID" value="ABV84658.1"/>
    <property type="molecule type" value="Genomic_DNA"/>
</dbReference>
<dbReference type="RefSeq" id="WP_041404593.1">
    <property type="nucleotide sequence ID" value="NC_009900.1"/>
</dbReference>
<dbReference type="SMR" id="A8F172"/>
<dbReference type="KEGG" id="rms:RMA_0420"/>
<dbReference type="HOGENOM" id="CLU_035188_0_1_5"/>
<dbReference type="Proteomes" id="UP000001311">
    <property type="component" value="Chromosome"/>
</dbReference>
<dbReference type="GO" id="GO:0005737">
    <property type="term" value="C:cytoplasm"/>
    <property type="evidence" value="ECO:0007669"/>
    <property type="project" value="UniProtKB-SubCell"/>
</dbReference>
<dbReference type="GO" id="GO:0005524">
    <property type="term" value="F:ATP binding"/>
    <property type="evidence" value="ECO:0007669"/>
    <property type="project" value="UniProtKB-KW"/>
</dbReference>
<dbReference type="GO" id="GO:0000049">
    <property type="term" value="F:tRNA binding"/>
    <property type="evidence" value="ECO:0007669"/>
    <property type="project" value="UniProtKB-KW"/>
</dbReference>
<dbReference type="GO" id="GO:0103016">
    <property type="term" value="F:tRNA-uridine 2-sulfurtransferase activity"/>
    <property type="evidence" value="ECO:0007669"/>
    <property type="project" value="UniProtKB-EC"/>
</dbReference>
<dbReference type="GO" id="GO:0002143">
    <property type="term" value="P:tRNA wobble position uridine thiolation"/>
    <property type="evidence" value="ECO:0007669"/>
    <property type="project" value="TreeGrafter"/>
</dbReference>
<dbReference type="CDD" id="cd01998">
    <property type="entry name" value="MnmA_TRMU-like"/>
    <property type="match status" value="1"/>
</dbReference>
<dbReference type="FunFam" id="2.30.30.280:FF:000001">
    <property type="entry name" value="tRNA-specific 2-thiouridylase MnmA"/>
    <property type="match status" value="1"/>
</dbReference>
<dbReference type="FunFam" id="2.40.30.10:FF:000127">
    <property type="entry name" value="tRNA-specific 2-thiouridylase MnmA"/>
    <property type="match status" value="1"/>
</dbReference>
<dbReference type="FunFam" id="3.40.50.620:FF:000115">
    <property type="entry name" value="tRNA-specific 2-thiouridylase MnmA"/>
    <property type="match status" value="1"/>
</dbReference>
<dbReference type="Gene3D" id="2.30.30.280">
    <property type="entry name" value="Adenine nucleotide alpha hydrolases-like domains"/>
    <property type="match status" value="1"/>
</dbReference>
<dbReference type="Gene3D" id="3.40.50.620">
    <property type="entry name" value="HUPs"/>
    <property type="match status" value="1"/>
</dbReference>
<dbReference type="Gene3D" id="2.40.30.10">
    <property type="entry name" value="Translation factors"/>
    <property type="match status" value="1"/>
</dbReference>
<dbReference type="HAMAP" id="MF_00144">
    <property type="entry name" value="tRNA_thiouridyl_MnmA"/>
    <property type="match status" value="1"/>
</dbReference>
<dbReference type="InterPro" id="IPR004506">
    <property type="entry name" value="MnmA-like"/>
</dbReference>
<dbReference type="InterPro" id="IPR046885">
    <property type="entry name" value="MnmA-like_C"/>
</dbReference>
<dbReference type="InterPro" id="IPR046884">
    <property type="entry name" value="MnmA-like_central"/>
</dbReference>
<dbReference type="InterPro" id="IPR023382">
    <property type="entry name" value="MnmA-like_central_sf"/>
</dbReference>
<dbReference type="InterPro" id="IPR014729">
    <property type="entry name" value="Rossmann-like_a/b/a_fold"/>
</dbReference>
<dbReference type="NCBIfam" id="NF001138">
    <property type="entry name" value="PRK00143.1"/>
    <property type="match status" value="1"/>
</dbReference>
<dbReference type="NCBIfam" id="TIGR00420">
    <property type="entry name" value="trmU"/>
    <property type="match status" value="1"/>
</dbReference>
<dbReference type="PANTHER" id="PTHR11933:SF5">
    <property type="entry name" value="MITOCHONDRIAL TRNA-SPECIFIC 2-THIOURIDYLASE 1"/>
    <property type="match status" value="1"/>
</dbReference>
<dbReference type="PANTHER" id="PTHR11933">
    <property type="entry name" value="TRNA 5-METHYLAMINOMETHYL-2-THIOURIDYLATE -METHYLTRANSFERASE"/>
    <property type="match status" value="1"/>
</dbReference>
<dbReference type="Pfam" id="PF03054">
    <property type="entry name" value="tRNA_Me_trans"/>
    <property type="match status" value="1"/>
</dbReference>
<dbReference type="Pfam" id="PF20258">
    <property type="entry name" value="tRNA_Me_trans_C"/>
    <property type="match status" value="1"/>
</dbReference>
<dbReference type="Pfam" id="PF20259">
    <property type="entry name" value="tRNA_Me_trans_M"/>
    <property type="match status" value="1"/>
</dbReference>
<dbReference type="SUPFAM" id="SSF52402">
    <property type="entry name" value="Adenine nucleotide alpha hydrolases-like"/>
    <property type="match status" value="1"/>
</dbReference>